<reference key="1">
    <citation type="submission" date="2003-03" db="EMBL/GenBank/DDBJ databases">
        <title>The complete genome sequence of Neisseria gonorrhoeae.</title>
        <authorList>
            <person name="Lewis L.A."/>
            <person name="Gillaspy A.F."/>
            <person name="McLaughlin R.E."/>
            <person name="Gipson M."/>
            <person name="Ducey T.F."/>
            <person name="Ownbey T."/>
            <person name="Hartman K."/>
            <person name="Nydick C."/>
            <person name="Carson M.B."/>
            <person name="Vaughn J."/>
            <person name="Thomson C."/>
            <person name="Song L."/>
            <person name="Lin S."/>
            <person name="Yuan X."/>
            <person name="Najar F."/>
            <person name="Zhan M."/>
            <person name="Ren Q."/>
            <person name="Zhu H."/>
            <person name="Qi S."/>
            <person name="Kenton S.M."/>
            <person name="Lai H."/>
            <person name="White J.D."/>
            <person name="Clifton S."/>
            <person name="Roe B.A."/>
            <person name="Dyer D.W."/>
        </authorList>
    </citation>
    <scope>NUCLEOTIDE SEQUENCE [LARGE SCALE GENOMIC DNA]</scope>
    <source>
        <strain>ATCC 700825 / FA 1090</strain>
    </source>
</reference>
<comment type="catalytic activity">
    <reaction evidence="1">
        <text>beta-D-fructose 1,6-bisphosphate + H2O = beta-D-fructose 6-phosphate + phosphate</text>
        <dbReference type="Rhea" id="RHEA:11064"/>
        <dbReference type="ChEBI" id="CHEBI:15377"/>
        <dbReference type="ChEBI" id="CHEBI:32966"/>
        <dbReference type="ChEBI" id="CHEBI:43474"/>
        <dbReference type="ChEBI" id="CHEBI:57634"/>
        <dbReference type="EC" id="3.1.3.11"/>
    </reaction>
</comment>
<comment type="cofactor">
    <cofactor evidence="1">
        <name>Mg(2+)</name>
        <dbReference type="ChEBI" id="CHEBI:18420"/>
    </cofactor>
    <text evidence="1">Binds 2 magnesium ions per subunit.</text>
</comment>
<comment type="pathway">
    <text evidence="1">Carbohydrate biosynthesis; gluconeogenesis.</text>
</comment>
<comment type="subunit">
    <text evidence="1">Homotetramer.</text>
</comment>
<comment type="subcellular location">
    <subcellularLocation>
        <location evidence="1">Cytoplasm</location>
    </subcellularLocation>
</comment>
<comment type="similarity">
    <text evidence="1">Belongs to the FBPase class 1 family.</text>
</comment>
<keyword id="KW-0119">Carbohydrate metabolism</keyword>
<keyword id="KW-0963">Cytoplasm</keyword>
<keyword id="KW-0378">Hydrolase</keyword>
<keyword id="KW-0460">Magnesium</keyword>
<keyword id="KW-0479">Metal-binding</keyword>
<keyword id="KW-1185">Reference proteome</keyword>
<proteinExistence type="inferred from homology"/>
<dbReference type="EC" id="3.1.3.11" evidence="1"/>
<dbReference type="EMBL" id="AE004969">
    <property type="protein sequence ID" value="AAW89564.1"/>
    <property type="molecule type" value="Genomic_DNA"/>
</dbReference>
<dbReference type="RefSeq" id="WP_003691115.1">
    <property type="nucleotide sequence ID" value="NC_002946.2"/>
</dbReference>
<dbReference type="RefSeq" id="YP_207976.1">
    <property type="nucleotide sequence ID" value="NC_002946.2"/>
</dbReference>
<dbReference type="SMR" id="Q5F8C3"/>
<dbReference type="STRING" id="242231.NGO_0862"/>
<dbReference type="KEGG" id="ngo:NGO_0862"/>
<dbReference type="PATRIC" id="fig|242231.10.peg.1017"/>
<dbReference type="HOGENOM" id="CLU_039977_0_0_4"/>
<dbReference type="UniPathway" id="UPA00138"/>
<dbReference type="Proteomes" id="UP000000535">
    <property type="component" value="Chromosome"/>
</dbReference>
<dbReference type="GO" id="GO:0005829">
    <property type="term" value="C:cytosol"/>
    <property type="evidence" value="ECO:0007669"/>
    <property type="project" value="TreeGrafter"/>
</dbReference>
<dbReference type="GO" id="GO:0042132">
    <property type="term" value="F:fructose 1,6-bisphosphate 1-phosphatase activity"/>
    <property type="evidence" value="ECO:0007669"/>
    <property type="project" value="UniProtKB-UniRule"/>
</dbReference>
<dbReference type="GO" id="GO:0000287">
    <property type="term" value="F:magnesium ion binding"/>
    <property type="evidence" value="ECO:0007669"/>
    <property type="project" value="UniProtKB-UniRule"/>
</dbReference>
<dbReference type="GO" id="GO:0030388">
    <property type="term" value="P:fructose 1,6-bisphosphate metabolic process"/>
    <property type="evidence" value="ECO:0007669"/>
    <property type="project" value="TreeGrafter"/>
</dbReference>
<dbReference type="GO" id="GO:0006002">
    <property type="term" value="P:fructose 6-phosphate metabolic process"/>
    <property type="evidence" value="ECO:0007669"/>
    <property type="project" value="TreeGrafter"/>
</dbReference>
<dbReference type="GO" id="GO:0006000">
    <property type="term" value="P:fructose metabolic process"/>
    <property type="evidence" value="ECO:0007669"/>
    <property type="project" value="TreeGrafter"/>
</dbReference>
<dbReference type="GO" id="GO:0006094">
    <property type="term" value="P:gluconeogenesis"/>
    <property type="evidence" value="ECO:0007669"/>
    <property type="project" value="UniProtKB-UniRule"/>
</dbReference>
<dbReference type="GO" id="GO:0005986">
    <property type="term" value="P:sucrose biosynthetic process"/>
    <property type="evidence" value="ECO:0007669"/>
    <property type="project" value="TreeGrafter"/>
</dbReference>
<dbReference type="CDD" id="cd00354">
    <property type="entry name" value="FBPase"/>
    <property type="match status" value="1"/>
</dbReference>
<dbReference type="FunFam" id="3.30.540.10:FF:000006">
    <property type="entry name" value="Fructose-1,6-bisphosphatase class 1"/>
    <property type="match status" value="1"/>
</dbReference>
<dbReference type="FunFam" id="3.40.190.80:FF:000011">
    <property type="entry name" value="Fructose-1,6-bisphosphatase class 1"/>
    <property type="match status" value="1"/>
</dbReference>
<dbReference type="Gene3D" id="3.40.190.80">
    <property type="match status" value="1"/>
</dbReference>
<dbReference type="Gene3D" id="3.30.540.10">
    <property type="entry name" value="Fructose-1,6-Bisphosphatase, subunit A, domain 1"/>
    <property type="match status" value="1"/>
</dbReference>
<dbReference type="HAMAP" id="MF_01855">
    <property type="entry name" value="FBPase_class1"/>
    <property type="match status" value="1"/>
</dbReference>
<dbReference type="InterPro" id="IPR044015">
    <property type="entry name" value="FBPase_C_dom"/>
</dbReference>
<dbReference type="InterPro" id="IPR000146">
    <property type="entry name" value="FBPase_class-1"/>
</dbReference>
<dbReference type="InterPro" id="IPR033391">
    <property type="entry name" value="FBPase_N"/>
</dbReference>
<dbReference type="InterPro" id="IPR028343">
    <property type="entry name" value="FBPtase"/>
</dbReference>
<dbReference type="NCBIfam" id="NF006779">
    <property type="entry name" value="PRK09293.1-3"/>
    <property type="match status" value="1"/>
</dbReference>
<dbReference type="NCBIfam" id="NF006780">
    <property type="entry name" value="PRK09293.1-4"/>
    <property type="match status" value="1"/>
</dbReference>
<dbReference type="PANTHER" id="PTHR11556">
    <property type="entry name" value="FRUCTOSE-1,6-BISPHOSPHATASE-RELATED"/>
    <property type="match status" value="1"/>
</dbReference>
<dbReference type="PANTHER" id="PTHR11556:SF35">
    <property type="entry name" value="SEDOHEPTULOSE-1,7-BISPHOSPHATASE, CHLOROPLASTIC"/>
    <property type="match status" value="1"/>
</dbReference>
<dbReference type="Pfam" id="PF00316">
    <property type="entry name" value="FBPase"/>
    <property type="match status" value="1"/>
</dbReference>
<dbReference type="Pfam" id="PF18913">
    <property type="entry name" value="FBPase_C"/>
    <property type="match status" value="1"/>
</dbReference>
<dbReference type="PIRSF" id="PIRSF500210">
    <property type="entry name" value="FBPtase"/>
    <property type="match status" value="1"/>
</dbReference>
<dbReference type="PIRSF" id="PIRSF000904">
    <property type="entry name" value="FBPtase_SBPase"/>
    <property type="match status" value="1"/>
</dbReference>
<dbReference type="PRINTS" id="PR00115">
    <property type="entry name" value="F16BPHPHTASE"/>
</dbReference>
<dbReference type="SUPFAM" id="SSF56655">
    <property type="entry name" value="Carbohydrate phosphatase"/>
    <property type="match status" value="1"/>
</dbReference>
<sequence length="324" mass="35474">MDTLTRFLPEHLQQNQLPEALGGVLLSVVSACTEINAKVRLGALAGVLGMAGTGNIQGEDQKKLDVIANNIMIDTLKANPAVAGLASEEEDTFVSAGENGRYLVLFDPLDGSSNIDVNISVGTIFSILAKPEGALATESFLQTGRQQLAAGYVLYGPQTQLVFTFGHGVYVFTLNAENEFVLTKENPKVPESTKEFAINMSNRRHWLPPVQQYVDELLAGETGTRGKNYNMRWVASMVAEIHRILMRGGVFMYLQDKRDPSKPGKLRLMYEANPMALILEQAGASASNAYQAMLDIQPESLHQRVAVIMGSSEEVDYLNRLHSK</sequence>
<organism>
    <name type="scientific">Neisseria gonorrhoeae (strain ATCC 700825 / FA 1090)</name>
    <dbReference type="NCBI Taxonomy" id="242231"/>
    <lineage>
        <taxon>Bacteria</taxon>
        <taxon>Pseudomonadati</taxon>
        <taxon>Pseudomonadota</taxon>
        <taxon>Betaproteobacteria</taxon>
        <taxon>Neisseriales</taxon>
        <taxon>Neisseriaceae</taxon>
        <taxon>Neisseria</taxon>
    </lineage>
</organism>
<evidence type="ECO:0000255" key="1">
    <source>
        <dbReference type="HAMAP-Rule" id="MF_01855"/>
    </source>
</evidence>
<name>F16PA_NEIG1</name>
<feature type="chain" id="PRO_0000364605" description="Fructose-1,6-bisphosphatase class 1">
    <location>
        <begin position="1"/>
        <end position="324"/>
    </location>
</feature>
<feature type="binding site" evidence="1">
    <location>
        <position position="88"/>
    </location>
    <ligand>
        <name>Mg(2+)</name>
        <dbReference type="ChEBI" id="CHEBI:18420"/>
        <label>1</label>
    </ligand>
</feature>
<feature type="binding site" evidence="1">
    <location>
        <position position="107"/>
    </location>
    <ligand>
        <name>Mg(2+)</name>
        <dbReference type="ChEBI" id="CHEBI:18420"/>
        <label>1</label>
    </ligand>
</feature>
<feature type="binding site" evidence="1">
    <location>
        <position position="107"/>
    </location>
    <ligand>
        <name>Mg(2+)</name>
        <dbReference type="ChEBI" id="CHEBI:18420"/>
        <label>2</label>
    </ligand>
</feature>
<feature type="binding site" evidence="1">
    <location>
        <position position="109"/>
    </location>
    <ligand>
        <name>Mg(2+)</name>
        <dbReference type="ChEBI" id="CHEBI:18420"/>
        <label>1</label>
    </ligand>
</feature>
<feature type="binding site" evidence="1">
    <location>
        <begin position="110"/>
        <end position="113"/>
    </location>
    <ligand>
        <name>substrate</name>
    </ligand>
</feature>
<feature type="binding site" evidence="1">
    <location>
        <position position="110"/>
    </location>
    <ligand>
        <name>Mg(2+)</name>
        <dbReference type="ChEBI" id="CHEBI:18420"/>
        <label>2</label>
    </ligand>
</feature>
<feature type="binding site" evidence="1">
    <location>
        <position position="199"/>
    </location>
    <ligand>
        <name>substrate</name>
    </ligand>
</feature>
<feature type="binding site" evidence="1">
    <location>
        <position position="265"/>
    </location>
    <ligand>
        <name>substrate</name>
    </ligand>
</feature>
<feature type="binding site" evidence="1">
    <location>
        <position position="271"/>
    </location>
    <ligand>
        <name>Mg(2+)</name>
        <dbReference type="ChEBI" id="CHEBI:18420"/>
        <label>2</label>
    </ligand>
</feature>
<accession>Q5F8C3</accession>
<protein>
    <recommendedName>
        <fullName evidence="1">Fructose-1,6-bisphosphatase class 1</fullName>
        <shortName evidence="1">FBPase class 1</shortName>
        <ecNumber evidence="1">3.1.3.11</ecNumber>
    </recommendedName>
    <alternativeName>
        <fullName evidence="1">D-fructose-1,6-bisphosphate 1-phosphohydrolase class 1</fullName>
    </alternativeName>
</protein>
<gene>
    <name evidence="1" type="primary">fbp</name>
    <name type="ordered locus">NGO_0862</name>
</gene>